<dbReference type="EMBL" id="CP000920">
    <property type="protein sequence ID" value="ACO21154.1"/>
    <property type="molecule type" value="Genomic_DNA"/>
</dbReference>
<dbReference type="RefSeq" id="WP_001054562.1">
    <property type="nucleotide sequence ID" value="NC_012467.1"/>
</dbReference>
<dbReference type="SMR" id="C1CLL2"/>
<dbReference type="KEGG" id="spp:SPP_1533"/>
<dbReference type="HOGENOM" id="CLU_148047_5_2_9"/>
<dbReference type="GO" id="GO:0005886">
    <property type="term" value="C:plasma membrane"/>
    <property type="evidence" value="ECO:0007669"/>
    <property type="project" value="UniProtKB-SubCell"/>
</dbReference>
<dbReference type="GO" id="GO:0045259">
    <property type="term" value="C:proton-transporting ATP synthase complex"/>
    <property type="evidence" value="ECO:0007669"/>
    <property type="project" value="UniProtKB-KW"/>
</dbReference>
<dbReference type="GO" id="GO:0033177">
    <property type="term" value="C:proton-transporting two-sector ATPase complex, proton-transporting domain"/>
    <property type="evidence" value="ECO:0007669"/>
    <property type="project" value="InterPro"/>
</dbReference>
<dbReference type="GO" id="GO:0008289">
    <property type="term" value="F:lipid binding"/>
    <property type="evidence" value="ECO:0007669"/>
    <property type="project" value="UniProtKB-KW"/>
</dbReference>
<dbReference type="GO" id="GO:0046933">
    <property type="term" value="F:proton-transporting ATP synthase activity, rotational mechanism"/>
    <property type="evidence" value="ECO:0007669"/>
    <property type="project" value="UniProtKB-UniRule"/>
</dbReference>
<dbReference type="CDD" id="cd18121">
    <property type="entry name" value="ATP-synt_Fo_c"/>
    <property type="match status" value="1"/>
</dbReference>
<dbReference type="FunFam" id="1.20.20.10:FF:000017">
    <property type="entry name" value="ATP synthase subunit c"/>
    <property type="match status" value="1"/>
</dbReference>
<dbReference type="Gene3D" id="1.20.20.10">
    <property type="entry name" value="F1F0 ATP synthase subunit C"/>
    <property type="match status" value="1"/>
</dbReference>
<dbReference type="HAMAP" id="MF_01396">
    <property type="entry name" value="ATP_synth_c_bact"/>
    <property type="match status" value="1"/>
</dbReference>
<dbReference type="InterPro" id="IPR000454">
    <property type="entry name" value="ATP_synth_F0_csu"/>
</dbReference>
<dbReference type="InterPro" id="IPR020537">
    <property type="entry name" value="ATP_synth_F0_csu_DDCD_BS"/>
</dbReference>
<dbReference type="InterPro" id="IPR038662">
    <property type="entry name" value="ATP_synth_F0_csu_sf"/>
</dbReference>
<dbReference type="InterPro" id="IPR002379">
    <property type="entry name" value="ATPase_proteolipid_c-like_dom"/>
</dbReference>
<dbReference type="InterPro" id="IPR035921">
    <property type="entry name" value="F/V-ATP_Csub_sf"/>
</dbReference>
<dbReference type="NCBIfam" id="NF009997">
    <property type="entry name" value="PRK13467.1"/>
    <property type="match status" value="1"/>
</dbReference>
<dbReference type="Pfam" id="PF00137">
    <property type="entry name" value="ATP-synt_C"/>
    <property type="match status" value="1"/>
</dbReference>
<dbReference type="PRINTS" id="PR00124">
    <property type="entry name" value="ATPASEC"/>
</dbReference>
<dbReference type="SUPFAM" id="SSF81333">
    <property type="entry name" value="F1F0 ATP synthase subunit C"/>
    <property type="match status" value="1"/>
</dbReference>
<dbReference type="PROSITE" id="PS00605">
    <property type="entry name" value="ATPASE_C"/>
    <property type="match status" value="1"/>
</dbReference>
<reference key="1">
    <citation type="journal article" date="2010" name="Genome Biol.">
        <title>Structure and dynamics of the pan-genome of Streptococcus pneumoniae and closely related species.</title>
        <authorList>
            <person name="Donati C."/>
            <person name="Hiller N.L."/>
            <person name="Tettelin H."/>
            <person name="Muzzi A."/>
            <person name="Croucher N.J."/>
            <person name="Angiuoli S.V."/>
            <person name="Oggioni M."/>
            <person name="Dunning Hotopp J.C."/>
            <person name="Hu F.Z."/>
            <person name="Riley D.R."/>
            <person name="Covacci A."/>
            <person name="Mitchell T.J."/>
            <person name="Bentley S.D."/>
            <person name="Kilian M."/>
            <person name="Ehrlich G.D."/>
            <person name="Rappuoli R."/>
            <person name="Moxon E.R."/>
            <person name="Masignani V."/>
        </authorList>
    </citation>
    <scope>NUCLEOTIDE SEQUENCE [LARGE SCALE GENOMIC DNA]</scope>
    <source>
        <strain>P1031</strain>
    </source>
</reference>
<feature type="chain" id="PRO_1000184516" description="ATP synthase subunit c">
    <location>
        <begin position="1"/>
        <end position="66"/>
    </location>
</feature>
<feature type="transmembrane region" description="Helical" evidence="1">
    <location>
        <begin position="3"/>
        <end position="23"/>
    </location>
</feature>
<feature type="transmembrane region" description="Helical" evidence="1">
    <location>
        <begin position="45"/>
        <end position="65"/>
    </location>
</feature>
<feature type="site" description="Reversibly protonated during proton transport" evidence="1">
    <location>
        <position position="52"/>
    </location>
</feature>
<comment type="function">
    <text evidence="1">F(1)F(0) ATP synthase produces ATP from ADP in the presence of a proton or sodium gradient. F-type ATPases consist of two structural domains, F(1) containing the extramembraneous catalytic core and F(0) containing the membrane proton channel, linked together by a central stalk and a peripheral stalk. During catalysis, ATP synthesis in the catalytic domain of F(1) is coupled via a rotary mechanism of the central stalk subunits to proton translocation.</text>
</comment>
<comment type="function">
    <text evidence="1">Key component of the F(0) channel; it plays a direct role in translocation across the membrane. A homomeric c-ring of between 10-14 subunits forms the central stalk rotor element with the F(1) delta and epsilon subunits.</text>
</comment>
<comment type="subunit">
    <text evidence="1">F-type ATPases have 2 components, F(1) - the catalytic core - and F(0) - the membrane proton channel. F(1) has five subunits: alpha(3), beta(3), gamma(1), delta(1), epsilon(1). F(0) has three main subunits: a(1), b(2) and c(10-14). The alpha and beta chains form an alternating ring which encloses part of the gamma chain. F(1) is attached to F(0) by a central stalk formed by the gamma and epsilon chains, while a peripheral stalk is formed by the delta and b chains.</text>
</comment>
<comment type="subcellular location">
    <subcellularLocation>
        <location evidence="1">Cell membrane</location>
        <topology evidence="1">Multi-pass membrane protein</topology>
    </subcellularLocation>
</comment>
<comment type="similarity">
    <text evidence="1">Belongs to the ATPase C chain family.</text>
</comment>
<evidence type="ECO:0000255" key="1">
    <source>
        <dbReference type="HAMAP-Rule" id="MF_01396"/>
    </source>
</evidence>
<gene>
    <name evidence="1" type="primary">atpE</name>
    <name type="ordered locus">SPP_1533</name>
</gene>
<sequence>MNLTFLGLCIACMGVSVGEGLLMNGLFKSVARQPDMLSEFRSLMFLGVAFIEGTFFVTLVFSFIIK</sequence>
<proteinExistence type="inferred from homology"/>
<protein>
    <recommendedName>
        <fullName evidence="1">ATP synthase subunit c</fullName>
    </recommendedName>
    <alternativeName>
        <fullName evidence="1">ATP synthase F(0) sector subunit c</fullName>
    </alternativeName>
    <alternativeName>
        <fullName evidence="1">F-type ATPase subunit c</fullName>
        <shortName evidence="1">F-ATPase subunit c</shortName>
    </alternativeName>
    <alternativeName>
        <fullName evidence="1">Lipid-binding protein</fullName>
    </alternativeName>
</protein>
<accession>C1CLL2</accession>
<organism>
    <name type="scientific">Streptococcus pneumoniae (strain P1031)</name>
    <dbReference type="NCBI Taxonomy" id="488223"/>
    <lineage>
        <taxon>Bacteria</taxon>
        <taxon>Bacillati</taxon>
        <taxon>Bacillota</taxon>
        <taxon>Bacilli</taxon>
        <taxon>Lactobacillales</taxon>
        <taxon>Streptococcaceae</taxon>
        <taxon>Streptococcus</taxon>
    </lineage>
</organism>
<name>ATPL_STRZP</name>
<keyword id="KW-0066">ATP synthesis</keyword>
<keyword id="KW-1003">Cell membrane</keyword>
<keyword id="KW-0138">CF(0)</keyword>
<keyword id="KW-0375">Hydrogen ion transport</keyword>
<keyword id="KW-0406">Ion transport</keyword>
<keyword id="KW-0446">Lipid-binding</keyword>
<keyword id="KW-0472">Membrane</keyword>
<keyword id="KW-0812">Transmembrane</keyword>
<keyword id="KW-1133">Transmembrane helix</keyword>
<keyword id="KW-0813">Transport</keyword>